<dbReference type="EC" id="7.2.1.1" evidence="1"/>
<dbReference type="EMBL" id="CP000051">
    <property type="protein sequence ID" value="AAX50540.1"/>
    <property type="molecule type" value="Genomic_DNA"/>
</dbReference>
<dbReference type="RefSeq" id="WP_009872522.1">
    <property type="nucleotide sequence ID" value="NC_007429.1"/>
</dbReference>
<dbReference type="SMR" id="Q3KM82"/>
<dbReference type="KEGG" id="cta:CTA_0302"/>
<dbReference type="HOGENOM" id="CLU_046659_1_1_0"/>
<dbReference type="Proteomes" id="UP000002532">
    <property type="component" value="Chromosome"/>
</dbReference>
<dbReference type="GO" id="GO:0005886">
    <property type="term" value="C:plasma membrane"/>
    <property type="evidence" value="ECO:0007669"/>
    <property type="project" value="UniProtKB-SubCell"/>
</dbReference>
<dbReference type="GO" id="GO:0016655">
    <property type="term" value="F:oxidoreductase activity, acting on NAD(P)H, quinone or similar compound as acceptor"/>
    <property type="evidence" value="ECO:0007669"/>
    <property type="project" value="UniProtKB-UniRule"/>
</dbReference>
<dbReference type="GO" id="GO:0006814">
    <property type="term" value="P:sodium ion transport"/>
    <property type="evidence" value="ECO:0007669"/>
    <property type="project" value="UniProtKB-UniRule"/>
</dbReference>
<dbReference type="HAMAP" id="MF_00428">
    <property type="entry name" value="NqrD"/>
    <property type="match status" value="1"/>
</dbReference>
<dbReference type="InterPro" id="IPR011292">
    <property type="entry name" value="NqrD"/>
</dbReference>
<dbReference type="InterPro" id="IPR003667">
    <property type="entry name" value="NqrDE/RnfAE"/>
</dbReference>
<dbReference type="NCBIfam" id="TIGR01939">
    <property type="entry name" value="nqrD"/>
    <property type="match status" value="1"/>
</dbReference>
<dbReference type="NCBIfam" id="NF006777">
    <property type="entry name" value="PRK09292.1"/>
    <property type="match status" value="1"/>
</dbReference>
<dbReference type="PANTHER" id="PTHR30586">
    <property type="entry name" value="ELECTRON TRANSPORT COMPLEX PROTEIN RNFE"/>
    <property type="match status" value="1"/>
</dbReference>
<dbReference type="PANTHER" id="PTHR30586:SF1">
    <property type="entry name" value="NA(+)-TRANSLOCATING NADH-QUINONE REDUCTASE SUBUNIT D"/>
    <property type="match status" value="1"/>
</dbReference>
<dbReference type="Pfam" id="PF02508">
    <property type="entry name" value="Rnf-Nqr"/>
    <property type="match status" value="1"/>
</dbReference>
<dbReference type="PIRSF" id="PIRSF006102">
    <property type="entry name" value="NQR_DE"/>
    <property type="match status" value="1"/>
</dbReference>
<organism>
    <name type="scientific">Chlamydia trachomatis serovar A (strain ATCC VR-571B / DSM 19440 / HAR-13)</name>
    <dbReference type="NCBI Taxonomy" id="315277"/>
    <lineage>
        <taxon>Bacteria</taxon>
        <taxon>Pseudomonadati</taxon>
        <taxon>Chlamydiota</taxon>
        <taxon>Chlamydiia</taxon>
        <taxon>Chlamydiales</taxon>
        <taxon>Chlamydiaceae</taxon>
        <taxon>Chlamydia/Chlamydophila group</taxon>
        <taxon>Chlamydia</taxon>
    </lineage>
</organism>
<feature type="chain" id="PRO_1000060151" description="Na(+)-translocating NADH-quinone reductase subunit D">
    <location>
        <begin position="1"/>
        <end position="213"/>
    </location>
</feature>
<feature type="transmembrane region" description="Helical" evidence="1">
    <location>
        <begin position="22"/>
        <end position="42"/>
    </location>
</feature>
<feature type="transmembrane region" description="Helical" evidence="1">
    <location>
        <begin position="43"/>
        <end position="63"/>
    </location>
</feature>
<feature type="transmembrane region" description="Helical" evidence="1">
    <location>
        <begin position="77"/>
        <end position="97"/>
    </location>
</feature>
<feature type="transmembrane region" description="Helical" evidence="1">
    <location>
        <begin position="101"/>
        <end position="121"/>
    </location>
</feature>
<feature type="transmembrane region" description="Helical" evidence="1">
    <location>
        <begin position="131"/>
        <end position="151"/>
    </location>
</feature>
<feature type="transmembrane region" description="Helical" evidence="1">
    <location>
        <begin position="183"/>
        <end position="203"/>
    </location>
</feature>
<comment type="function">
    <text evidence="1">NQR complex catalyzes the reduction of ubiquinone-1 to ubiquinol by two successive reactions, coupled with the transport of Na(+) ions from the cytoplasm to the periplasm. NqrA to NqrE are probably involved in the second step, the conversion of ubisemiquinone to ubiquinol.</text>
</comment>
<comment type="catalytic activity">
    <reaction evidence="1">
        <text>a ubiquinone + n Na(+)(in) + NADH + H(+) = a ubiquinol + n Na(+)(out) + NAD(+)</text>
        <dbReference type="Rhea" id="RHEA:47748"/>
        <dbReference type="Rhea" id="RHEA-COMP:9565"/>
        <dbReference type="Rhea" id="RHEA-COMP:9566"/>
        <dbReference type="ChEBI" id="CHEBI:15378"/>
        <dbReference type="ChEBI" id="CHEBI:16389"/>
        <dbReference type="ChEBI" id="CHEBI:17976"/>
        <dbReference type="ChEBI" id="CHEBI:29101"/>
        <dbReference type="ChEBI" id="CHEBI:57540"/>
        <dbReference type="ChEBI" id="CHEBI:57945"/>
        <dbReference type="EC" id="7.2.1.1"/>
    </reaction>
</comment>
<comment type="subunit">
    <text evidence="1">Composed of six subunits; NqrA, NqrB, NqrC, NqrD, NqrE and NqrF.</text>
</comment>
<comment type="subcellular location">
    <subcellularLocation>
        <location evidence="1">Cell inner membrane</location>
        <topology evidence="1">Multi-pass membrane protein</topology>
    </subcellularLocation>
</comment>
<comment type="similarity">
    <text evidence="1">Belongs to the NqrDE/RnfAE family.</text>
</comment>
<reference key="1">
    <citation type="journal article" date="2005" name="Infect. Immun.">
        <title>Comparative genomic analysis of Chlamydia trachomatis oculotropic and genitotropic strains.</title>
        <authorList>
            <person name="Carlson J.H."/>
            <person name="Porcella S.F."/>
            <person name="McClarty G."/>
            <person name="Caldwell H.D."/>
        </authorList>
    </citation>
    <scope>NUCLEOTIDE SEQUENCE [LARGE SCALE GENOMIC DNA]</scope>
    <source>
        <strain>ATCC VR-571B / DSM 19440 / HAR-13</strain>
    </source>
</reference>
<protein>
    <recommendedName>
        <fullName evidence="1">Na(+)-translocating NADH-quinone reductase subunit D</fullName>
        <shortName evidence="1">Na(+)-NQR subunit D</shortName>
        <shortName evidence="1">Na(+)-translocating NQR subunit D</shortName>
        <ecNumber evidence="1">7.2.1.1</ecNumber>
    </recommendedName>
    <alternativeName>
        <fullName evidence="1">NQR complex subunit D</fullName>
    </alternativeName>
    <alternativeName>
        <fullName evidence="1">NQR-1 subunit D</fullName>
    </alternativeName>
</protein>
<name>NQRD_CHLTA</name>
<gene>
    <name evidence="1" type="primary">nqrD</name>
    <name type="ordered locus">CTA_0302</name>
</gene>
<keyword id="KW-0997">Cell inner membrane</keyword>
<keyword id="KW-1003">Cell membrane</keyword>
<keyword id="KW-0406">Ion transport</keyword>
<keyword id="KW-0472">Membrane</keyword>
<keyword id="KW-0520">NAD</keyword>
<keyword id="KW-0915">Sodium</keyword>
<keyword id="KW-0739">Sodium transport</keyword>
<keyword id="KW-1278">Translocase</keyword>
<keyword id="KW-0812">Transmembrane</keyword>
<keyword id="KW-1133">Transmembrane helix</keyword>
<keyword id="KW-0813">Transport</keyword>
<keyword id="KW-0830">Ubiquinone</keyword>
<accession>Q3KM82</accession>
<sequence>MTTNKSYLTYFTDALWINNQPLIAILGICSALAVTTTVTTALTMGFAVSFVTGCSSFVVSLLRKITPESVRMIAQLIIISLFVILIDQFLKAFFFTISKTLSVFVGLIITNCIVMGRAESMARHVSPIPAFLDGLGSGLGYGWVLVCISIIRELFGFGTILGFRVIPEILYTSAAHPDGYENLGLMVLAPSAFFLLGIMIWIVNIIRAPKTKR</sequence>
<evidence type="ECO:0000255" key="1">
    <source>
        <dbReference type="HAMAP-Rule" id="MF_00428"/>
    </source>
</evidence>
<proteinExistence type="inferred from homology"/>